<keyword id="KW-0067">ATP-binding</keyword>
<keyword id="KW-0436">Ligase</keyword>
<keyword id="KW-0496">Mitochondrion</keyword>
<keyword id="KW-0547">Nucleotide-binding</keyword>
<keyword id="KW-0648">Protein biosynthesis</keyword>
<keyword id="KW-1185">Reference proteome</keyword>
<name>GATB_DROME</name>
<organism>
    <name type="scientific">Drosophila melanogaster</name>
    <name type="common">Fruit fly</name>
    <dbReference type="NCBI Taxonomy" id="7227"/>
    <lineage>
        <taxon>Eukaryota</taxon>
        <taxon>Metazoa</taxon>
        <taxon>Ecdysozoa</taxon>
        <taxon>Arthropoda</taxon>
        <taxon>Hexapoda</taxon>
        <taxon>Insecta</taxon>
        <taxon>Pterygota</taxon>
        <taxon>Neoptera</taxon>
        <taxon>Endopterygota</taxon>
        <taxon>Diptera</taxon>
        <taxon>Brachycera</taxon>
        <taxon>Muscomorpha</taxon>
        <taxon>Ephydroidea</taxon>
        <taxon>Drosophilidae</taxon>
        <taxon>Drosophila</taxon>
        <taxon>Sophophora</taxon>
    </lineage>
</organism>
<gene>
    <name evidence="2" type="primary">GatB</name>
    <name evidence="2" type="ORF">CG5463</name>
</gene>
<accession>Q9VCD0</accession>
<dbReference type="EC" id="6.3.5.-" evidence="1"/>
<dbReference type="EMBL" id="AE014297">
    <property type="protein sequence ID" value="AAF56239.2"/>
    <property type="molecule type" value="Genomic_DNA"/>
</dbReference>
<dbReference type="RefSeq" id="NP_651217.2">
    <property type="nucleotide sequence ID" value="NM_142960.4"/>
</dbReference>
<dbReference type="SMR" id="Q9VCD0"/>
<dbReference type="FunCoup" id="Q9VCD0">
    <property type="interactions" value="1034"/>
</dbReference>
<dbReference type="STRING" id="7227.FBpp0083969"/>
<dbReference type="PaxDb" id="7227-FBpp0083969"/>
<dbReference type="EnsemblMetazoa" id="FBtr0084584">
    <property type="protein sequence ID" value="FBpp0083969"/>
    <property type="gene ID" value="FBgn0039153"/>
</dbReference>
<dbReference type="GeneID" id="42861"/>
<dbReference type="KEGG" id="dme:Dmel_CG5463"/>
<dbReference type="UCSC" id="CG5463-RA">
    <property type="organism name" value="d. melanogaster"/>
</dbReference>
<dbReference type="AGR" id="FB:FBgn0039153"/>
<dbReference type="CTD" id="5188"/>
<dbReference type="FlyBase" id="FBgn0039153">
    <property type="gene designation" value="GatB"/>
</dbReference>
<dbReference type="VEuPathDB" id="VectorBase:FBgn0039153"/>
<dbReference type="eggNOG" id="KOG2438">
    <property type="taxonomic scope" value="Eukaryota"/>
</dbReference>
<dbReference type="GeneTree" id="ENSGT00390000016644"/>
<dbReference type="HOGENOM" id="CLU_019240_1_1_1"/>
<dbReference type="InParanoid" id="Q9VCD0"/>
<dbReference type="OMA" id="FELMFKE"/>
<dbReference type="OrthoDB" id="1722066at2759"/>
<dbReference type="PhylomeDB" id="Q9VCD0"/>
<dbReference type="BioGRID-ORCS" id="42861">
    <property type="hits" value="0 hits in 1 CRISPR screen"/>
</dbReference>
<dbReference type="GenomeRNAi" id="42861"/>
<dbReference type="PRO" id="PR:Q9VCD0"/>
<dbReference type="Proteomes" id="UP000000803">
    <property type="component" value="Chromosome 3R"/>
</dbReference>
<dbReference type="Bgee" id="FBgn0039153">
    <property type="expression patterns" value="Expressed in adult differentiating enterocyte in digestive tract and 56 other cell types or tissues"/>
</dbReference>
<dbReference type="ExpressionAtlas" id="Q9VCD0">
    <property type="expression patterns" value="baseline and differential"/>
</dbReference>
<dbReference type="GO" id="GO:0030956">
    <property type="term" value="C:glutamyl-tRNA(Gln) amidotransferase complex"/>
    <property type="evidence" value="ECO:0000250"/>
    <property type="project" value="FlyBase"/>
</dbReference>
<dbReference type="GO" id="GO:0005739">
    <property type="term" value="C:mitochondrion"/>
    <property type="evidence" value="ECO:0000250"/>
    <property type="project" value="FlyBase"/>
</dbReference>
<dbReference type="GO" id="GO:0005524">
    <property type="term" value="F:ATP binding"/>
    <property type="evidence" value="ECO:0007669"/>
    <property type="project" value="UniProtKB-KW"/>
</dbReference>
<dbReference type="GO" id="GO:0050567">
    <property type="term" value="F:glutaminyl-tRNA synthase (glutamine-hydrolyzing) activity"/>
    <property type="evidence" value="ECO:0000318"/>
    <property type="project" value="GO_Central"/>
</dbReference>
<dbReference type="GO" id="GO:0070681">
    <property type="term" value="P:glutaminyl-tRNAGln biosynthesis via transamidation"/>
    <property type="evidence" value="ECO:0000250"/>
    <property type="project" value="FlyBase"/>
</dbReference>
<dbReference type="GO" id="GO:0032543">
    <property type="term" value="P:mitochondrial translation"/>
    <property type="evidence" value="ECO:0000250"/>
    <property type="project" value="FlyBase"/>
</dbReference>
<dbReference type="FunFam" id="1.10.10.410:FF:000001">
    <property type="entry name" value="Aspartyl/glutamyl-tRNA(Asn/Gln) amidotransferase subunit B"/>
    <property type="match status" value="1"/>
</dbReference>
<dbReference type="Gene3D" id="1.10.10.410">
    <property type="match status" value="1"/>
</dbReference>
<dbReference type="HAMAP" id="MF_00121">
    <property type="entry name" value="GatB"/>
    <property type="match status" value="1"/>
</dbReference>
<dbReference type="InterPro" id="IPR017959">
    <property type="entry name" value="Asn/Gln-tRNA_amidoTrfase_suB/E"/>
</dbReference>
<dbReference type="InterPro" id="IPR006075">
    <property type="entry name" value="Asn/Gln-tRNA_Trfase_suB/E_cat"/>
</dbReference>
<dbReference type="InterPro" id="IPR018027">
    <property type="entry name" value="Asn/Gln_amidotransferase"/>
</dbReference>
<dbReference type="InterPro" id="IPR003789">
    <property type="entry name" value="Asn/Gln_tRNA_amidoTrase-B-like"/>
</dbReference>
<dbReference type="InterPro" id="IPR004413">
    <property type="entry name" value="GatB"/>
</dbReference>
<dbReference type="InterPro" id="IPR023168">
    <property type="entry name" value="GatB_Yqey_C_2"/>
</dbReference>
<dbReference type="InterPro" id="IPR014746">
    <property type="entry name" value="Gln_synth/guanido_kin_cat_dom"/>
</dbReference>
<dbReference type="NCBIfam" id="TIGR00133">
    <property type="entry name" value="gatB"/>
    <property type="match status" value="1"/>
</dbReference>
<dbReference type="NCBIfam" id="NF004012">
    <property type="entry name" value="PRK05477.1-2"/>
    <property type="match status" value="1"/>
</dbReference>
<dbReference type="NCBIfam" id="NF004014">
    <property type="entry name" value="PRK05477.1-4"/>
    <property type="match status" value="1"/>
</dbReference>
<dbReference type="PANTHER" id="PTHR11659">
    <property type="entry name" value="GLUTAMYL-TRNA GLN AMIDOTRANSFERASE SUBUNIT B MITOCHONDRIAL AND PROKARYOTIC PET112-RELATED"/>
    <property type="match status" value="1"/>
</dbReference>
<dbReference type="PANTHER" id="PTHR11659:SF0">
    <property type="entry name" value="GLUTAMYL-TRNA(GLN) AMIDOTRANSFERASE SUBUNIT B, MITOCHONDRIAL"/>
    <property type="match status" value="1"/>
</dbReference>
<dbReference type="Pfam" id="PF02934">
    <property type="entry name" value="GatB_N"/>
    <property type="match status" value="1"/>
</dbReference>
<dbReference type="Pfam" id="PF02637">
    <property type="entry name" value="GatB_Yqey"/>
    <property type="match status" value="1"/>
</dbReference>
<dbReference type="SMART" id="SM00845">
    <property type="entry name" value="GatB_Yqey"/>
    <property type="match status" value="1"/>
</dbReference>
<dbReference type="SUPFAM" id="SSF89095">
    <property type="entry name" value="GatB/YqeY motif"/>
    <property type="match status" value="1"/>
</dbReference>
<dbReference type="SUPFAM" id="SSF55931">
    <property type="entry name" value="Glutamine synthetase/guanido kinase"/>
    <property type="match status" value="1"/>
</dbReference>
<proteinExistence type="inferred from homology"/>
<evidence type="ECO:0000255" key="1">
    <source>
        <dbReference type="HAMAP-Rule" id="MF_03147"/>
    </source>
</evidence>
<evidence type="ECO:0000312" key="2">
    <source>
        <dbReference type="FlyBase" id="FBgn0039153"/>
    </source>
</evidence>
<feature type="chain" id="PRO_0000413223" description="Glutamyl-tRNA(Gln) amidotransferase subunit B, mitochondrial">
    <location>
        <begin position="1"/>
        <end position="516"/>
    </location>
</feature>
<reference key="1">
    <citation type="journal article" date="2000" name="Science">
        <title>The genome sequence of Drosophila melanogaster.</title>
        <authorList>
            <person name="Adams M.D."/>
            <person name="Celniker S.E."/>
            <person name="Holt R.A."/>
            <person name="Evans C.A."/>
            <person name="Gocayne J.D."/>
            <person name="Amanatides P.G."/>
            <person name="Scherer S.E."/>
            <person name="Li P.W."/>
            <person name="Hoskins R.A."/>
            <person name="Galle R.F."/>
            <person name="George R.A."/>
            <person name="Lewis S.E."/>
            <person name="Richards S."/>
            <person name="Ashburner M."/>
            <person name="Henderson S.N."/>
            <person name="Sutton G.G."/>
            <person name="Wortman J.R."/>
            <person name="Yandell M.D."/>
            <person name="Zhang Q."/>
            <person name="Chen L.X."/>
            <person name="Brandon R.C."/>
            <person name="Rogers Y.-H.C."/>
            <person name="Blazej R.G."/>
            <person name="Champe M."/>
            <person name="Pfeiffer B.D."/>
            <person name="Wan K.H."/>
            <person name="Doyle C."/>
            <person name="Baxter E.G."/>
            <person name="Helt G."/>
            <person name="Nelson C.R."/>
            <person name="Miklos G.L.G."/>
            <person name="Abril J.F."/>
            <person name="Agbayani A."/>
            <person name="An H.-J."/>
            <person name="Andrews-Pfannkoch C."/>
            <person name="Baldwin D."/>
            <person name="Ballew R.M."/>
            <person name="Basu A."/>
            <person name="Baxendale J."/>
            <person name="Bayraktaroglu L."/>
            <person name="Beasley E.M."/>
            <person name="Beeson K.Y."/>
            <person name="Benos P.V."/>
            <person name="Berman B.P."/>
            <person name="Bhandari D."/>
            <person name="Bolshakov S."/>
            <person name="Borkova D."/>
            <person name="Botchan M.R."/>
            <person name="Bouck J."/>
            <person name="Brokstein P."/>
            <person name="Brottier P."/>
            <person name="Burtis K.C."/>
            <person name="Busam D.A."/>
            <person name="Butler H."/>
            <person name="Cadieu E."/>
            <person name="Center A."/>
            <person name="Chandra I."/>
            <person name="Cherry J.M."/>
            <person name="Cawley S."/>
            <person name="Dahlke C."/>
            <person name="Davenport L.B."/>
            <person name="Davies P."/>
            <person name="de Pablos B."/>
            <person name="Delcher A."/>
            <person name="Deng Z."/>
            <person name="Mays A.D."/>
            <person name="Dew I."/>
            <person name="Dietz S.M."/>
            <person name="Dodson K."/>
            <person name="Doup L.E."/>
            <person name="Downes M."/>
            <person name="Dugan-Rocha S."/>
            <person name="Dunkov B.C."/>
            <person name="Dunn P."/>
            <person name="Durbin K.J."/>
            <person name="Evangelista C.C."/>
            <person name="Ferraz C."/>
            <person name="Ferriera S."/>
            <person name="Fleischmann W."/>
            <person name="Fosler C."/>
            <person name="Gabrielian A.E."/>
            <person name="Garg N.S."/>
            <person name="Gelbart W.M."/>
            <person name="Glasser K."/>
            <person name="Glodek A."/>
            <person name="Gong F."/>
            <person name="Gorrell J.H."/>
            <person name="Gu Z."/>
            <person name="Guan P."/>
            <person name="Harris M."/>
            <person name="Harris N.L."/>
            <person name="Harvey D.A."/>
            <person name="Heiman T.J."/>
            <person name="Hernandez J.R."/>
            <person name="Houck J."/>
            <person name="Hostin D."/>
            <person name="Houston K.A."/>
            <person name="Howland T.J."/>
            <person name="Wei M.-H."/>
            <person name="Ibegwam C."/>
            <person name="Jalali M."/>
            <person name="Kalush F."/>
            <person name="Karpen G.H."/>
            <person name="Ke Z."/>
            <person name="Kennison J.A."/>
            <person name="Ketchum K.A."/>
            <person name="Kimmel B.E."/>
            <person name="Kodira C.D."/>
            <person name="Kraft C.L."/>
            <person name="Kravitz S."/>
            <person name="Kulp D."/>
            <person name="Lai Z."/>
            <person name="Lasko P."/>
            <person name="Lei Y."/>
            <person name="Levitsky A.A."/>
            <person name="Li J.H."/>
            <person name="Li Z."/>
            <person name="Liang Y."/>
            <person name="Lin X."/>
            <person name="Liu X."/>
            <person name="Mattei B."/>
            <person name="McIntosh T.C."/>
            <person name="McLeod M.P."/>
            <person name="McPherson D."/>
            <person name="Merkulov G."/>
            <person name="Milshina N.V."/>
            <person name="Mobarry C."/>
            <person name="Morris J."/>
            <person name="Moshrefi A."/>
            <person name="Mount S.M."/>
            <person name="Moy M."/>
            <person name="Murphy B."/>
            <person name="Murphy L."/>
            <person name="Muzny D.M."/>
            <person name="Nelson D.L."/>
            <person name="Nelson D.R."/>
            <person name="Nelson K.A."/>
            <person name="Nixon K."/>
            <person name="Nusskern D.R."/>
            <person name="Pacleb J.M."/>
            <person name="Palazzolo M."/>
            <person name="Pittman G.S."/>
            <person name="Pan S."/>
            <person name="Pollard J."/>
            <person name="Puri V."/>
            <person name="Reese M.G."/>
            <person name="Reinert K."/>
            <person name="Remington K."/>
            <person name="Saunders R.D.C."/>
            <person name="Scheeler F."/>
            <person name="Shen H."/>
            <person name="Shue B.C."/>
            <person name="Siden-Kiamos I."/>
            <person name="Simpson M."/>
            <person name="Skupski M.P."/>
            <person name="Smith T.J."/>
            <person name="Spier E."/>
            <person name="Spradling A.C."/>
            <person name="Stapleton M."/>
            <person name="Strong R."/>
            <person name="Sun E."/>
            <person name="Svirskas R."/>
            <person name="Tector C."/>
            <person name="Turner R."/>
            <person name="Venter E."/>
            <person name="Wang A.H."/>
            <person name="Wang X."/>
            <person name="Wang Z.-Y."/>
            <person name="Wassarman D.A."/>
            <person name="Weinstock G.M."/>
            <person name="Weissenbach J."/>
            <person name="Williams S.M."/>
            <person name="Woodage T."/>
            <person name="Worley K.C."/>
            <person name="Wu D."/>
            <person name="Yang S."/>
            <person name="Yao Q.A."/>
            <person name="Ye J."/>
            <person name="Yeh R.-F."/>
            <person name="Zaveri J.S."/>
            <person name="Zhan M."/>
            <person name="Zhang G."/>
            <person name="Zhao Q."/>
            <person name="Zheng L."/>
            <person name="Zheng X.H."/>
            <person name="Zhong F.N."/>
            <person name="Zhong W."/>
            <person name="Zhou X."/>
            <person name="Zhu S.C."/>
            <person name="Zhu X."/>
            <person name="Smith H.O."/>
            <person name="Gibbs R.A."/>
            <person name="Myers E.W."/>
            <person name="Rubin G.M."/>
            <person name="Venter J.C."/>
        </authorList>
    </citation>
    <scope>NUCLEOTIDE SEQUENCE [LARGE SCALE GENOMIC DNA]</scope>
    <source>
        <strain>Berkeley</strain>
    </source>
</reference>
<reference key="2">
    <citation type="journal article" date="2002" name="Genome Biol.">
        <title>Annotation of the Drosophila melanogaster euchromatic genome: a systematic review.</title>
        <authorList>
            <person name="Misra S."/>
            <person name="Crosby M.A."/>
            <person name="Mungall C.J."/>
            <person name="Matthews B.B."/>
            <person name="Campbell K.S."/>
            <person name="Hradecky P."/>
            <person name="Huang Y."/>
            <person name="Kaminker J.S."/>
            <person name="Millburn G.H."/>
            <person name="Prochnik S.E."/>
            <person name="Smith C.D."/>
            <person name="Tupy J.L."/>
            <person name="Whitfield E.J."/>
            <person name="Bayraktaroglu L."/>
            <person name="Berman B.P."/>
            <person name="Bettencourt B.R."/>
            <person name="Celniker S.E."/>
            <person name="de Grey A.D.N.J."/>
            <person name="Drysdale R.A."/>
            <person name="Harris N.L."/>
            <person name="Richter J."/>
            <person name="Russo S."/>
            <person name="Schroeder A.J."/>
            <person name="Shu S.Q."/>
            <person name="Stapleton M."/>
            <person name="Yamada C."/>
            <person name="Ashburner M."/>
            <person name="Gelbart W.M."/>
            <person name="Rubin G.M."/>
            <person name="Lewis S.E."/>
        </authorList>
    </citation>
    <scope>GENOME REANNOTATION</scope>
    <source>
        <strain>Berkeley</strain>
    </source>
</reference>
<protein>
    <recommendedName>
        <fullName evidence="1">Glutamyl-tRNA(Gln) amidotransferase subunit B, mitochondrial</fullName>
        <shortName evidence="1">Glu-AdT subunit B</shortName>
        <ecNumber evidence="1">6.3.5.-</ecNumber>
    </recommendedName>
</protein>
<sequence length="516" mass="57376">MHYSIIRKLVTAPKLANVPKRKWKSVVGLEVHAQIASASKLFSGSGTSFGAPLNSSVAYFDASIPGTLPVLNRKCVESGIKTSLALGCRVNEVSMFDRKHYFYADLPNGYQITQQRAALANDGKMTFPVITPGKKVYYKTAKLLQLQLEQDSGKSLHDDYLKRSLVDLNRAGLPLMELVFAPDLETGEEAASLVKELILILRRLQTCSCKMEEGALRVDANISIHQEGDPLGVRTEVKNIGSVRSISQAITYEINRQLETVANGGVITNETRNWDAENRRTVAMRDKEVLQDYRFMPEPNLPPLHVNLKPGSMSTEDLLSVAALSEEIPELPEDTRQRLVEQHNLNAETAIILVNEPILLDHFLSITRSLSDLPNKVICNFLINDLLTYCNKLNLDVEDCSIKADDLKDILMSLHAELINLQAARQLVDLLHNNPKAKVSELIELHSLQQICSPDEIENLCQLAIANQAKAVEQYQKGKAKALFAIAGEVAKLSSQKANMKLVVQRLEKLLKPTNK</sequence>
<comment type="function">
    <text evidence="1">Allows the formation of correctly charged Gln-tRNA(Gln) through the transamidation of misacylated Glu-tRNA(Gln) in the mitochondria. The reaction takes place in the presence of glutamine and ATP through an activated gamma-phospho-Glu-tRNA(Gln).</text>
</comment>
<comment type="catalytic activity">
    <reaction evidence="1">
        <text>L-glutamyl-tRNA(Gln) + L-glutamine + ATP + H2O = L-glutaminyl-tRNA(Gln) + L-glutamate + ADP + phosphate + H(+)</text>
        <dbReference type="Rhea" id="RHEA:17521"/>
        <dbReference type="Rhea" id="RHEA-COMP:9681"/>
        <dbReference type="Rhea" id="RHEA-COMP:9684"/>
        <dbReference type="ChEBI" id="CHEBI:15377"/>
        <dbReference type="ChEBI" id="CHEBI:15378"/>
        <dbReference type="ChEBI" id="CHEBI:29985"/>
        <dbReference type="ChEBI" id="CHEBI:30616"/>
        <dbReference type="ChEBI" id="CHEBI:43474"/>
        <dbReference type="ChEBI" id="CHEBI:58359"/>
        <dbReference type="ChEBI" id="CHEBI:78520"/>
        <dbReference type="ChEBI" id="CHEBI:78521"/>
        <dbReference type="ChEBI" id="CHEBI:456216"/>
    </reaction>
</comment>
<comment type="subunit">
    <text evidence="1">Subunit of the heterotrimeric GatCAB amidotransferase (AdT) complex, composed of A, B and C subunits.</text>
</comment>
<comment type="subcellular location">
    <subcellularLocation>
        <location evidence="1">Mitochondrion</location>
    </subcellularLocation>
</comment>
<comment type="miscellaneous">
    <text evidence="1">This protein may be expected to contain an N-terminal transit peptide but none has been predicted.</text>
</comment>
<comment type="similarity">
    <text evidence="1">Belongs to the GatB/GatE family. GatB subfamily.</text>
</comment>